<sequence>MLLQRFFTRALHSTRQLYAGSGGSGGLEKSALAALRKKTGYTFANCKKALEKHNNDVGLAEKWLHEQAQTLGWSKATKVADRATAHGLIGVLIRGNRGAMVELNCETDFVARNDTFKRFVDHVACMCLQYTDLTDFDGDLWKLGFDADALRNLRTEEGRTLGDHLALLIGAIGENATIRRALCFKANNDLKLVGYAHPAPTNVGTTEGITQVGKYGAIVAYRSTHPLLDFEFHKSICQQIVGMKPTKIGEYDKDKPAENKDDETCLIHQEYLLDADKTVGEALQEHNCEIVDYHRFECGEHTERSLEAIIRSQHQSSN</sequence>
<keyword id="KW-0251">Elongation factor</keyword>
<keyword id="KW-0496">Mitochondrion</keyword>
<keyword id="KW-0648">Protein biosynthesis</keyword>
<keyword id="KW-1185">Reference proteome</keyword>
<keyword id="KW-0809">Transit peptide</keyword>
<organism>
    <name type="scientific">Drosophila melanogaster</name>
    <name type="common">Fruit fly</name>
    <dbReference type="NCBI Taxonomy" id="7227"/>
    <lineage>
        <taxon>Eukaryota</taxon>
        <taxon>Metazoa</taxon>
        <taxon>Ecdysozoa</taxon>
        <taxon>Arthropoda</taxon>
        <taxon>Hexapoda</taxon>
        <taxon>Insecta</taxon>
        <taxon>Pterygota</taxon>
        <taxon>Neoptera</taxon>
        <taxon>Endopterygota</taxon>
        <taxon>Diptera</taxon>
        <taxon>Brachycera</taxon>
        <taxon>Muscomorpha</taxon>
        <taxon>Ephydroidea</taxon>
        <taxon>Drosophilidae</taxon>
        <taxon>Drosophila</taxon>
        <taxon>Sophophora</taxon>
    </lineage>
</organism>
<gene>
    <name evidence="2" type="primary">mEFTs</name>
    <name evidence="2" type="ORF">CG6412</name>
</gene>
<evidence type="ECO:0000255" key="1">
    <source>
        <dbReference type="HAMAP-Rule" id="MF_03135"/>
    </source>
</evidence>
<evidence type="ECO:0000312" key="2">
    <source>
        <dbReference type="FlyBase" id="FBgn0032646"/>
    </source>
</evidence>
<proteinExistence type="evidence at protein level"/>
<protein>
    <recommendedName>
        <fullName evidence="1">Elongation factor Ts, mitochondrial</fullName>
        <shortName evidence="1">EF-Ts</shortName>
        <shortName evidence="1">EF-TsMt</shortName>
    </recommendedName>
</protein>
<feature type="transit peptide" description="Mitochondrion" evidence="1">
    <location>
        <begin position="1"/>
        <end position="18"/>
    </location>
</feature>
<feature type="chain" id="PRO_0000402318" description="Elongation factor Ts, mitochondrial">
    <location>
        <begin position="19"/>
        <end position="318"/>
    </location>
</feature>
<comment type="function">
    <text evidence="1">Associates with the EF-Tu.GDP complex and induces the exchange of GDP to GTP. It remains bound to the aminoacyl-tRNA.EF-Tu.GTP complex up to the GTP hydrolysis stage on the ribosome.</text>
</comment>
<comment type="interaction">
    <interactant intactId="EBI-188047">
        <id>Q9VJC7</id>
    </interactant>
    <interactant intactId="EBI-91956">
        <id>Q7K3V6</id>
        <label>mEFTu2</label>
    </interactant>
    <organismsDiffer>false</organismsDiffer>
    <experiments>5</experiments>
</comment>
<comment type="subcellular location">
    <subcellularLocation>
        <location evidence="1">Mitochondrion</location>
    </subcellularLocation>
</comment>
<comment type="similarity">
    <text evidence="1">Belongs to the EF-Ts family.</text>
</comment>
<reference key="1">
    <citation type="journal article" date="2000" name="Science">
        <title>The genome sequence of Drosophila melanogaster.</title>
        <authorList>
            <person name="Adams M.D."/>
            <person name="Celniker S.E."/>
            <person name="Holt R.A."/>
            <person name="Evans C.A."/>
            <person name="Gocayne J.D."/>
            <person name="Amanatides P.G."/>
            <person name="Scherer S.E."/>
            <person name="Li P.W."/>
            <person name="Hoskins R.A."/>
            <person name="Galle R.F."/>
            <person name="George R.A."/>
            <person name="Lewis S.E."/>
            <person name="Richards S."/>
            <person name="Ashburner M."/>
            <person name="Henderson S.N."/>
            <person name="Sutton G.G."/>
            <person name="Wortman J.R."/>
            <person name="Yandell M.D."/>
            <person name="Zhang Q."/>
            <person name="Chen L.X."/>
            <person name="Brandon R.C."/>
            <person name="Rogers Y.-H.C."/>
            <person name="Blazej R.G."/>
            <person name="Champe M."/>
            <person name="Pfeiffer B.D."/>
            <person name="Wan K.H."/>
            <person name="Doyle C."/>
            <person name="Baxter E.G."/>
            <person name="Helt G."/>
            <person name="Nelson C.R."/>
            <person name="Miklos G.L.G."/>
            <person name="Abril J.F."/>
            <person name="Agbayani A."/>
            <person name="An H.-J."/>
            <person name="Andrews-Pfannkoch C."/>
            <person name="Baldwin D."/>
            <person name="Ballew R.M."/>
            <person name="Basu A."/>
            <person name="Baxendale J."/>
            <person name="Bayraktaroglu L."/>
            <person name="Beasley E.M."/>
            <person name="Beeson K.Y."/>
            <person name="Benos P.V."/>
            <person name="Berman B.P."/>
            <person name="Bhandari D."/>
            <person name="Bolshakov S."/>
            <person name="Borkova D."/>
            <person name="Botchan M.R."/>
            <person name="Bouck J."/>
            <person name="Brokstein P."/>
            <person name="Brottier P."/>
            <person name="Burtis K.C."/>
            <person name="Busam D.A."/>
            <person name="Butler H."/>
            <person name="Cadieu E."/>
            <person name="Center A."/>
            <person name="Chandra I."/>
            <person name="Cherry J.M."/>
            <person name="Cawley S."/>
            <person name="Dahlke C."/>
            <person name="Davenport L.B."/>
            <person name="Davies P."/>
            <person name="de Pablos B."/>
            <person name="Delcher A."/>
            <person name="Deng Z."/>
            <person name="Mays A.D."/>
            <person name="Dew I."/>
            <person name="Dietz S.M."/>
            <person name="Dodson K."/>
            <person name="Doup L.E."/>
            <person name="Downes M."/>
            <person name="Dugan-Rocha S."/>
            <person name="Dunkov B.C."/>
            <person name="Dunn P."/>
            <person name="Durbin K.J."/>
            <person name="Evangelista C.C."/>
            <person name="Ferraz C."/>
            <person name="Ferriera S."/>
            <person name="Fleischmann W."/>
            <person name="Fosler C."/>
            <person name="Gabrielian A.E."/>
            <person name="Garg N.S."/>
            <person name="Gelbart W.M."/>
            <person name="Glasser K."/>
            <person name="Glodek A."/>
            <person name="Gong F."/>
            <person name="Gorrell J.H."/>
            <person name="Gu Z."/>
            <person name="Guan P."/>
            <person name="Harris M."/>
            <person name="Harris N.L."/>
            <person name="Harvey D.A."/>
            <person name="Heiman T.J."/>
            <person name="Hernandez J.R."/>
            <person name="Houck J."/>
            <person name="Hostin D."/>
            <person name="Houston K.A."/>
            <person name="Howland T.J."/>
            <person name="Wei M.-H."/>
            <person name="Ibegwam C."/>
            <person name="Jalali M."/>
            <person name="Kalush F."/>
            <person name="Karpen G.H."/>
            <person name="Ke Z."/>
            <person name="Kennison J.A."/>
            <person name="Ketchum K.A."/>
            <person name="Kimmel B.E."/>
            <person name="Kodira C.D."/>
            <person name="Kraft C.L."/>
            <person name="Kravitz S."/>
            <person name="Kulp D."/>
            <person name="Lai Z."/>
            <person name="Lasko P."/>
            <person name="Lei Y."/>
            <person name="Levitsky A.A."/>
            <person name="Li J.H."/>
            <person name="Li Z."/>
            <person name="Liang Y."/>
            <person name="Lin X."/>
            <person name="Liu X."/>
            <person name="Mattei B."/>
            <person name="McIntosh T.C."/>
            <person name="McLeod M.P."/>
            <person name="McPherson D."/>
            <person name="Merkulov G."/>
            <person name="Milshina N.V."/>
            <person name="Mobarry C."/>
            <person name="Morris J."/>
            <person name="Moshrefi A."/>
            <person name="Mount S.M."/>
            <person name="Moy M."/>
            <person name="Murphy B."/>
            <person name="Murphy L."/>
            <person name="Muzny D.M."/>
            <person name="Nelson D.L."/>
            <person name="Nelson D.R."/>
            <person name="Nelson K.A."/>
            <person name="Nixon K."/>
            <person name="Nusskern D.R."/>
            <person name="Pacleb J.M."/>
            <person name="Palazzolo M."/>
            <person name="Pittman G.S."/>
            <person name="Pan S."/>
            <person name="Pollard J."/>
            <person name="Puri V."/>
            <person name="Reese M.G."/>
            <person name="Reinert K."/>
            <person name="Remington K."/>
            <person name="Saunders R.D.C."/>
            <person name="Scheeler F."/>
            <person name="Shen H."/>
            <person name="Shue B.C."/>
            <person name="Siden-Kiamos I."/>
            <person name="Simpson M."/>
            <person name="Skupski M.P."/>
            <person name="Smith T.J."/>
            <person name="Spier E."/>
            <person name="Spradling A.C."/>
            <person name="Stapleton M."/>
            <person name="Strong R."/>
            <person name="Sun E."/>
            <person name="Svirskas R."/>
            <person name="Tector C."/>
            <person name="Turner R."/>
            <person name="Venter E."/>
            <person name="Wang A.H."/>
            <person name="Wang X."/>
            <person name="Wang Z.-Y."/>
            <person name="Wassarman D.A."/>
            <person name="Weinstock G.M."/>
            <person name="Weissenbach J."/>
            <person name="Williams S.M."/>
            <person name="Woodage T."/>
            <person name="Worley K.C."/>
            <person name="Wu D."/>
            <person name="Yang S."/>
            <person name="Yao Q.A."/>
            <person name="Ye J."/>
            <person name="Yeh R.-F."/>
            <person name="Zaveri J.S."/>
            <person name="Zhan M."/>
            <person name="Zhang G."/>
            <person name="Zhao Q."/>
            <person name="Zheng L."/>
            <person name="Zheng X.H."/>
            <person name="Zhong F.N."/>
            <person name="Zhong W."/>
            <person name="Zhou X."/>
            <person name="Zhu S.C."/>
            <person name="Zhu X."/>
            <person name="Smith H.O."/>
            <person name="Gibbs R.A."/>
            <person name="Myers E.W."/>
            <person name="Rubin G.M."/>
            <person name="Venter J.C."/>
        </authorList>
    </citation>
    <scope>NUCLEOTIDE SEQUENCE [LARGE SCALE GENOMIC DNA]</scope>
    <source>
        <strain>Berkeley</strain>
    </source>
</reference>
<reference key="2">
    <citation type="journal article" date="2002" name="Genome Biol.">
        <title>Annotation of the Drosophila melanogaster euchromatic genome: a systematic review.</title>
        <authorList>
            <person name="Misra S."/>
            <person name="Crosby M.A."/>
            <person name="Mungall C.J."/>
            <person name="Matthews B.B."/>
            <person name="Campbell K.S."/>
            <person name="Hradecky P."/>
            <person name="Huang Y."/>
            <person name="Kaminker J.S."/>
            <person name="Millburn G.H."/>
            <person name="Prochnik S.E."/>
            <person name="Smith C.D."/>
            <person name="Tupy J.L."/>
            <person name="Whitfield E.J."/>
            <person name="Bayraktaroglu L."/>
            <person name="Berman B.P."/>
            <person name="Bettencourt B.R."/>
            <person name="Celniker S.E."/>
            <person name="de Grey A.D.N.J."/>
            <person name="Drysdale R.A."/>
            <person name="Harris N.L."/>
            <person name="Richter J."/>
            <person name="Russo S."/>
            <person name="Schroeder A.J."/>
            <person name="Shu S.Q."/>
            <person name="Stapleton M."/>
            <person name="Yamada C."/>
            <person name="Ashburner M."/>
            <person name="Gelbart W.M."/>
            <person name="Rubin G.M."/>
            <person name="Lewis S.E."/>
        </authorList>
    </citation>
    <scope>GENOME REANNOTATION</scope>
    <source>
        <strain>Berkeley</strain>
    </source>
</reference>
<reference key="3">
    <citation type="journal article" date="2002" name="Genome Biol.">
        <title>A Drosophila full-length cDNA resource.</title>
        <authorList>
            <person name="Stapleton M."/>
            <person name="Carlson J.W."/>
            <person name="Brokstein P."/>
            <person name="Yu C."/>
            <person name="Champe M."/>
            <person name="George R.A."/>
            <person name="Guarin H."/>
            <person name="Kronmiller B."/>
            <person name="Pacleb J.M."/>
            <person name="Park S."/>
            <person name="Wan K.H."/>
            <person name="Rubin G.M."/>
            <person name="Celniker S.E."/>
        </authorList>
    </citation>
    <scope>NUCLEOTIDE SEQUENCE [LARGE SCALE MRNA]</scope>
    <source>
        <strain>Berkeley</strain>
        <tissue>Embryo</tissue>
    </source>
</reference>
<dbReference type="EMBL" id="AE014134">
    <property type="protein sequence ID" value="AAF53625.1"/>
    <property type="molecule type" value="Genomic_DNA"/>
</dbReference>
<dbReference type="EMBL" id="AY051938">
    <property type="protein sequence ID" value="AAK93362.1"/>
    <property type="molecule type" value="mRNA"/>
</dbReference>
<dbReference type="RefSeq" id="NP_609847.1">
    <property type="nucleotide sequence ID" value="NM_136003.5"/>
</dbReference>
<dbReference type="SMR" id="Q9VJC7"/>
<dbReference type="BioGRID" id="61056">
    <property type="interactions" value="10"/>
</dbReference>
<dbReference type="FunCoup" id="Q9VJC7">
    <property type="interactions" value="2139"/>
</dbReference>
<dbReference type="IntAct" id="Q9VJC7">
    <property type="interactions" value="6"/>
</dbReference>
<dbReference type="STRING" id="7227.FBpp0080547"/>
<dbReference type="PaxDb" id="7227-FBpp0080547"/>
<dbReference type="DNASU" id="35060"/>
<dbReference type="EnsemblMetazoa" id="FBtr0080994">
    <property type="protein sequence ID" value="FBpp0080547"/>
    <property type="gene ID" value="FBgn0032646"/>
</dbReference>
<dbReference type="GeneID" id="35060"/>
<dbReference type="KEGG" id="dme:Dmel_CG6412"/>
<dbReference type="UCSC" id="CG6412-RA">
    <property type="organism name" value="d. melanogaster"/>
</dbReference>
<dbReference type="AGR" id="FB:FBgn0032646"/>
<dbReference type="CTD" id="35060"/>
<dbReference type="FlyBase" id="FBgn0032646">
    <property type="gene designation" value="mEFTs"/>
</dbReference>
<dbReference type="VEuPathDB" id="VectorBase:FBgn0032646"/>
<dbReference type="eggNOG" id="KOG1071">
    <property type="taxonomic scope" value="Eukaryota"/>
</dbReference>
<dbReference type="GeneTree" id="ENSGT00390000016293"/>
<dbReference type="HOGENOM" id="CLU_047155_4_0_1"/>
<dbReference type="InParanoid" id="Q9VJC7"/>
<dbReference type="OMA" id="QEYMLDD"/>
<dbReference type="OrthoDB" id="277235at2759"/>
<dbReference type="PhylomeDB" id="Q9VJC7"/>
<dbReference type="BioGRID-ORCS" id="35060">
    <property type="hits" value="0 hits in 1 CRISPR screen"/>
</dbReference>
<dbReference type="ChiTaRS" id="CG6412">
    <property type="organism name" value="fly"/>
</dbReference>
<dbReference type="GenomeRNAi" id="35060"/>
<dbReference type="PRO" id="PR:Q9VJC7"/>
<dbReference type="Proteomes" id="UP000000803">
    <property type="component" value="Chromosome 2L"/>
</dbReference>
<dbReference type="Bgee" id="FBgn0032646">
    <property type="expression patterns" value="Expressed in early elongation stage spermatid (Drosophila) in testis and 163 other cell types or tissues"/>
</dbReference>
<dbReference type="GO" id="GO:0005739">
    <property type="term" value="C:mitochondrion"/>
    <property type="evidence" value="ECO:0000250"/>
    <property type="project" value="FlyBase"/>
</dbReference>
<dbReference type="GO" id="GO:0003746">
    <property type="term" value="F:translation elongation factor activity"/>
    <property type="evidence" value="ECO:0000318"/>
    <property type="project" value="GO_Central"/>
</dbReference>
<dbReference type="GO" id="GO:0070125">
    <property type="term" value="P:mitochondrial translational elongation"/>
    <property type="evidence" value="ECO:0000318"/>
    <property type="project" value="GO_Central"/>
</dbReference>
<dbReference type="GO" id="GO:0070129">
    <property type="term" value="P:regulation of mitochondrial translation"/>
    <property type="evidence" value="ECO:0000250"/>
    <property type="project" value="FlyBase"/>
</dbReference>
<dbReference type="CDD" id="cd14275">
    <property type="entry name" value="UBA_EF-Ts"/>
    <property type="match status" value="1"/>
</dbReference>
<dbReference type="FunFam" id="1.10.8.10:FF:000031">
    <property type="entry name" value="Elongation factor Ts, mitochondrial"/>
    <property type="match status" value="1"/>
</dbReference>
<dbReference type="FunFam" id="3.30.479.20:FF:000026">
    <property type="entry name" value="Elongation factor Ts, mitochondrial"/>
    <property type="match status" value="1"/>
</dbReference>
<dbReference type="Gene3D" id="1.10.8.10">
    <property type="entry name" value="DNA helicase RuvA subunit, C-terminal domain"/>
    <property type="match status" value="1"/>
</dbReference>
<dbReference type="Gene3D" id="3.30.479.20">
    <property type="entry name" value="Elongation factor Ts, dimerisation domain"/>
    <property type="match status" value="2"/>
</dbReference>
<dbReference type="HAMAP" id="MF_00050">
    <property type="entry name" value="EF_Ts"/>
    <property type="match status" value="1"/>
</dbReference>
<dbReference type="InterPro" id="IPR036402">
    <property type="entry name" value="EF-Ts_dimer_sf"/>
</dbReference>
<dbReference type="InterPro" id="IPR001816">
    <property type="entry name" value="Transl_elong_EFTs/EF1B"/>
</dbReference>
<dbReference type="InterPro" id="IPR014039">
    <property type="entry name" value="Transl_elong_EFTs/EF1B_dimer"/>
</dbReference>
<dbReference type="InterPro" id="IPR018101">
    <property type="entry name" value="Transl_elong_Ts_CS"/>
</dbReference>
<dbReference type="InterPro" id="IPR009060">
    <property type="entry name" value="UBA-like_sf"/>
</dbReference>
<dbReference type="PANTHER" id="PTHR11741">
    <property type="entry name" value="ELONGATION FACTOR TS"/>
    <property type="match status" value="1"/>
</dbReference>
<dbReference type="PANTHER" id="PTHR11741:SF0">
    <property type="entry name" value="ELONGATION FACTOR TS, MITOCHONDRIAL"/>
    <property type="match status" value="1"/>
</dbReference>
<dbReference type="Pfam" id="PF25025">
    <property type="entry name" value="EF-Ts_N"/>
    <property type="match status" value="1"/>
</dbReference>
<dbReference type="Pfam" id="PF00889">
    <property type="entry name" value="EF_TS"/>
    <property type="match status" value="1"/>
</dbReference>
<dbReference type="SUPFAM" id="SSF54713">
    <property type="entry name" value="Elongation factor Ts (EF-Ts), dimerisation domain"/>
    <property type="match status" value="1"/>
</dbReference>
<dbReference type="SUPFAM" id="SSF46934">
    <property type="entry name" value="UBA-like"/>
    <property type="match status" value="1"/>
</dbReference>
<dbReference type="PROSITE" id="PS01127">
    <property type="entry name" value="EF_TS_2"/>
    <property type="match status" value="1"/>
</dbReference>
<accession>Q9VJC7</accession>
<name>EFTS_DROME</name>